<name>RL32_PSEAE</name>
<dbReference type="EMBL" id="AE004091">
    <property type="protein sequence ID" value="AAG06358.1"/>
    <property type="molecule type" value="Genomic_DNA"/>
</dbReference>
<dbReference type="PIR" id="B83273">
    <property type="entry name" value="B83273"/>
</dbReference>
<dbReference type="RefSeq" id="NP_251660.1">
    <property type="nucleotide sequence ID" value="NC_002516.2"/>
</dbReference>
<dbReference type="RefSeq" id="WP_003091143.1">
    <property type="nucleotide sequence ID" value="NZ_QZGE01000009.1"/>
</dbReference>
<dbReference type="PDB" id="7UNR">
    <property type="method" value="EM"/>
    <property type="resolution" value="2.90 A"/>
    <property type="chains" value="4=1-60"/>
</dbReference>
<dbReference type="PDB" id="7UNU">
    <property type="method" value="EM"/>
    <property type="resolution" value="2.90 A"/>
    <property type="chains" value="4=1-60"/>
</dbReference>
<dbReference type="PDB" id="7UNV">
    <property type="method" value="EM"/>
    <property type="resolution" value="2.70 A"/>
    <property type="chains" value="4=1-60"/>
</dbReference>
<dbReference type="PDB" id="7UNW">
    <property type="method" value="EM"/>
    <property type="resolution" value="2.60 A"/>
    <property type="chains" value="4=1-60"/>
</dbReference>
<dbReference type="PDB" id="8CD1">
    <property type="method" value="EM"/>
    <property type="resolution" value="3.00 A"/>
    <property type="chains" value="2=1-60"/>
</dbReference>
<dbReference type="PDB" id="8RWG">
    <property type="method" value="EM"/>
    <property type="resolution" value="2.46 A"/>
    <property type="chains" value="5=1-60"/>
</dbReference>
<dbReference type="PDBsum" id="7UNR"/>
<dbReference type="PDBsum" id="7UNU"/>
<dbReference type="PDBsum" id="7UNV"/>
<dbReference type="PDBsum" id="7UNW"/>
<dbReference type="PDBsum" id="8CD1"/>
<dbReference type="PDBsum" id="8RWG"/>
<dbReference type="EMDB" id="EMD-16566"/>
<dbReference type="EMDB" id="EMD-19547"/>
<dbReference type="EMDB" id="EMD-26630"/>
<dbReference type="EMDB" id="EMD-26633"/>
<dbReference type="EMDB" id="EMD-26634"/>
<dbReference type="EMDB" id="EMD-26635"/>
<dbReference type="SMR" id="Q9HZN4"/>
<dbReference type="FunCoup" id="Q9HZN4">
    <property type="interactions" value="250"/>
</dbReference>
<dbReference type="STRING" id="208964.PA2970"/>
<dbReference type="PaxDb" id="208964-PA2970"/>
<dbReference type="DNASU" id="880144"/>
<dbReference type="GeneID" id="77220539"/>
<dbReference type="GeneID" id="880144"/>
<dbReference type="KEGG" id="pae:PA2970"/>
<dbReference type="PATRIC" id="fig|208964.12.peg.3116"/>
<dbReference type="PseudoCAP" id="PA2970"/>
<dbReference type="HOGENOM" id="CLU_129084_2_1_6"/>
<dbReference type="InParanoid" id="Q9HZN4"/>
<dbReference type="OrthoDB" id="9801927at2"/>
<dbReference type="PhylomeDB" id="Q9HZN4"/>
<dbReference type="BioCyc" id="PAER208964:G1FZ6-3022-MONOMER"/>
<dbReference type="PRO" id="PR:Q9HZN4"/>
<dbReference type="Proteomes" id="UP000002438">
    <property type="component" value="Chromosome"/>
</dbReference>
<dbReference type="GO" id="GO:0022625">
    <property type="term" value="C:cytosolic large ribosomal subunit"/>
    <property type="evidence" value="ECO:0000318"/>
    <property type="project" value="GO_Central"/>
</dbReference>
<dbReference type="GO" id="GO:0003735">
    <property type="term" value="F:structural constituent of ribosome"/>
    <property type="evidence" value="ECO:0000318"/>
    <property type="project" value="GO_Central"/>
</dbReference>
<dbReference type="GO" id="GO:0006412">
    <property type="term" value="P:translation"/>
    <property type="evidence" value="ECO:0007669"/>
    <property type="project" value="UniProtKB-UniRule"/>
</dbReference>
<dbReference type="HAMAP" id="MF_00340">
    <property type="entry name" value="Ribosomal_bL32"/>
    <property type="match status" value="1"/>
</dbReference>
<dbReference type="InterPro" id="IPR002677">
    <property type="entry name" value="Ribosomal_bL32"/>
</dbReference>
<dbReference type="InterPro" id="IPR044957">
    <property type="entry name" value="Ribosomal_bL32_bact"/>
</dbReference>
<dbReference type="InterPro" id="IPR011332">
    <property type="entry name" value="Ribosomal_zn-bd"/>
</dbReference>
<dbReference type="NCBIfam" id="TIGR01031">
    <property type="entry name" value="rpmF_bact"/>
    <property type="match status" value="1"/>
</dbReference>
<dbReference type="PANTHER" id="PTHR35534">
    <property type="entry name" value="50S RIBOSOMAL PROTEIN L32"/>
    <property type="match status" value="1"/>
</dbReference>
<dbReference type="PANTHER" id="PTHR35534:SF1">
    <property type="entry name" value="LARGE RIBOSOMAL SUBUNIT PROTEIN BL32"/>
    <property type="match status" value="1"/>
</dbReference>
<dbReference type="Pfam" id="PF01783">
    <property type="entry name" value="Ribosomal_L32p"/>
    <property type="match status" value="1"/>
</dbReference>
<dbReference type="SUPFAM" id="SSF57829">
    <property type="entry name" value="Zn-binding ribosomal proteins"/>
    <property type="match status" value="1"/>
</dbReference>
<protein>
    <recommendedName>
        <fullName evidence="3">Large ribosomal subunit protein bL32</fullName>
    </recommendedName>
    <alternativeName>
        <fullName>50S ribosomal protein L32</fullName>
    </alternativeName>
</protein>
<accession>Q9HZN4</accession>
<accession>Q9R3F6</accession>
<reference key="1">
    <citation type="journal article" date="2000" name="Nature">
        <title>Complete genome sequence of Pseudomonas aeruginosa PAO1, an opportunistic pathogen.</title>
        <authorList>
            <person name="Stover C.K."/>
            <person name="Pham X.-Q.T."/>
            <person name="Erwin A.L."/>
            <person name="Mizoguchi S.D."/>
            <person name="Warrener P."/>
            <person name="Hickey M.J."/>
            <person name="Brinkman F.S.L."/>
            <person name="Hufnagle W.O."/>
            <person name="Kowalik D.J."/>
            <person name="Lagrou M."/>
            <person name="Garber R.L."/>
            <person name="Goltry L."/>
            <person name="Tolentino E."/>
            <person name="Westbrock-Wadman S."/>
            <person name="Yuan Y."/>
            <person name="Brody L.L."/>
            <person name="Coulter S.N."/>
            <person name="Folger K.R."/>
            <person name="Kas A."/>
            <person name="Larbig K."/>
            <person name="Lim R.M."/>
            <person name="Smith K.A."/>
            <person name="Spencer D.H."/>
            <person name="Wong G.K.-S."/>
            <person name="Wu Z."/>
            <person name="Paulsen I.T."/>
            <person name="Reizer J."/>
            <person name="Saier M.H. Jr."/>
            <person name="Hancock R.E.W."/>
            <person name="Lory S."/>
            <person name="Olson M.V."/>
        </authorList>
    </citation>
    <scope>NUCLEOTIDE SEQUENCE [LARGE SCALE GENOMIC DNA]</scope>
    <source>
        <strain>ATCC 15692 / DSM 22644 / CIP 104116 / JCM 14847 / LMG 12228 / 1C / PRS 101 / PAO1</strain>
    </source>
</reference>
<reference key="2">
    <citation type="journal article" date="1995" name="Int. J. Syst. Bacteriol.">
        <title>Comparative ribosomal protein sequence analyses of a phylogenetically defined genus, Pseudomonas, and its relatives.</title>
        <authorList>
            <person name="Ochi K."/>
        </authorList>
    </citation>
    <scope>PROTEIN SEQUENCE OF 2-23</scope>
    <source>
        <strain>ATCC 10145 / DSM 50071 / JCM 5962 / LMG 1242 / NBRC 12689 / NCIMB 8295 / NRRL B-771</strain>
    </source>
</reference>
<comment type="similarity">
    <text evidence="3">Belongs to the bacterial ribosomal protein bL32 family.</text>
</comment>
<sequence>MAVQQNKKSRSARDMRRSHDALESNALSVEKSTGEVHLRHHVSPDGFYRGRKVVDKGSDE</sequence>
<organism>
    <name type="scientific">Pseudomonas aeruginosa (strain ATCC 15692 / DSM 22644 / CIP 104116 / JCM 14847 / LMG 12228 / 1C / PRS 101 / PAO1)</name>
    <dbReference type="NCBI Taxonomy" id="208964"/>
    <lineage>
        <taxon>Bacteria</taxon>
        <taxon>Pseudomonadati</taxon>
        <taxon>Pseudomonadota</taxon>
        <taxon>Gammaproteobacteria</taxon>
        <taxon>Pseudomonadales</taxon>
        <taxon>Pseudomonadaceae</taxon>
        <taxon>Pseudomonas</taxon>
    </lineage>
</organism>
<proteinExistence type="evidence at protein level"/>
<evidence type="ECO:0000250" key="1"/>
<evidence type="ECO:0000256" key="2">
    <source>
        <dbReference type="SAM" id="MobiDB-lite"/>
    </source>
</evidence>
<evidence type="ECO:0000305" key="3"/>
<feature type="initiator methionine" description="Removed" evidence="1">
    <location>
        <position position="1"/>
    </location>
</feature>
<feature type="chain" id="PRO_0000172388" description="Large ribosomal subunit protein bL32">
    <location>
        <begin position="2"/>
        <end position="60"/>
    </location>
</feature>
<feature type="region of interest" description="Disordered" evidence="2">
    <location>
        <begin position="1"/>
        <end position="60"/>
    </location>
</feature>
<feature type="compositionally biased region" description="Basic and acidic residues" evidence="2">
    <location>
        <begin position="11"/>
        <end position="22"/>
    </location>
</feature>
<feature type="sequence conflict" description="In Ref. 2; AA sequence." evidence="3" ref="2">
    <original>A</original>
    <variation>C</variation>
    <location>
        <position position="2"/>
    </location>
</feature>
<keyword id="KW-0002">3D-structure</keyword>
<keyword id="KW-0903">Direct protein sequencing</keyword>
<keyword id="KW-1185">Reference proteome</keyword>
<keyword id="KW-0687">Ribonucleoprotein</keyword>
<keyword id="KW-0689">Ribosomal protein</keyword>
<gene>
    <name type="primary">rpmF</name>
    <name type="ordered locus">PA2970</name>
</gene>